<comment type="function">
    <text>Is probably involved in a pathway contributing to genomic integrity.</text>
</comment>
<comment type="subcellular location">
    <subcellularLocation>
        <location evidence="1">Endoplasmic reticulum membrane</location>
        <topology evidence="1">Single-pass type I membrane protein</topology>
    </subcellularLocation>
</comment>
<comment type="similarity">
    <text evidence="4">Belongs to the IRC22 family.</text>
</comment>
<dbReference type="EMBL" id="CH408052">
    <property type="protein sequence ID" value="EDV08827.1"/>
    <property type="molecule type" value="Genomic_DNA"/>
</dbReference>
<dbReference type="HOGENOM" id="CLU_078554_1_0_1"/>
<dbReference type="OrthoDB" id="11791at4893"/>
<dbReference type="Proteomes" id="UP000008335">
    <property type="component" value="Unassembled WGS sequence"/>
</dbReference>
<dbReference type="GO" id="GO:0005789">
    <property type="term" value="C:endoplasmic reticulum membrane"/>
    <property type="evidence" value="ECO:0007669"/>
    <property type="project" value="UniProtKB-SubCell"/>
</dbReference>
<dbReference type="InterPro" id="IPR005595">
    <property type="entry name" value="TRAP_alpha"/>
</dbReference>
<dbReference type="Pfam" id="PF03896">
    <property type="entry name" value="TRAP_alpha"/>
    <property type="match status" value="1"/>
</dbReference>
<keyword id="KW-0256">Endoplasmic reticulum</keyword>
<keyword id="KW-0472">Membrane</keyword>
<keyword id="KW-0732">Signal</keyword>
<keyword id="KW-0812">Transmembrane</keyword>
<keyword id="KW-1133">Transmembrane helix</keyword>
<proteinExistence type="inferred from homology"/>
<sequence>MRFSMLIGFNLLTALSSFCAAISANNSDNVEHEQEVAEAVAPPSINIEVKYDVVGKESENHDSFLEFYAEDTATLAYNVTNWEDTNITIFGVNGTIVTYPHGYPVADITGASIGPYEMEVNGTSKFGQDVTLNLPEGQYFLIPFLLASRFDEIVRIAAPPTLFEIVSPPISFFNPQFLSVQVIFLAIIGGVSYYYMKSKTNQRPSKKSATVKKVDESWLPETYKK</sequence>
<name>IRC22_YEAS1</name>
<reference key="1">
    <citation type="submission" date="2005-03" db="EMBL/GenBank/DDBJ databases">
        <title>Annotation of the Saccharomyces cerevisiae RM11-1a genome.</title>
        <authorList>
            <consortium name="The Broad Institute Genome Sequencing Platform"/>
            <person name="Birren B.W."/>
            <person name="Lander E.S."/>
            <person name="Galagan J.E."/>
            <person name="Nusbaum C."/>
            <person name="Devon K."/>
            <person name="Cuomo C."/>
            <person name="Jaffe D.B."/>
            <person name="Butler J."/>
            <person name="Alvarez P."/>
            <person name="Gnerre S."/>
            <person name="Grabherr M."/>
            <person name="Kleber M."/>
            <person name="Mauceli E.W."/>
            <person name="Brockman W."/>
            <person name="MacCallum I.A."/>
            <person name="Rounsley S."/>
            <person name="Young S.K."/>
            <person name="LaButti K."/>
            <person name="Pushparaj V."/>
            <person name="DeCaprio D."/>
            <person name="Crawford M."/>
            <person name="Koehrsen M."/>
            <person name="Engels R."/>
            <person name="Montgomery P."/>
            <person name="Pearson M."/>
            <person name="Howarth C."/>
            <person name="Larson L."/>
            <person name="Luoma S."/>
            <person name="White J."/>
            <person name="O'Leary S."/>
            <person name="Kodira C.D."/>
            <person name="Zeng Q."/>
            <person name="Yandava C."/>
            <person name="Alvarado L."/>
            <person name="Pratt S."/>
            <person name="Kruglyak L."/>
        </authorList>
    </citation>
    <scope>NUCLEOTIDE SEQUENCE [LARGE SCALE GENOMIC DNA]</scope>
    <source>
        <strain>RM11-1a</strain>
    </source>
</reference>
<feature type="signal peptide" evidence="2">
    <location>
        <begin position="1"/>
        <end position="21"/>
    </location>
</feature>
<feature type="chain" id="PRO_0000399086" description="Increased recombination centers protein 22">
    <location>
        <begin position="22"/>
        <end position="225"/>
    </location>
</feature>
<feature type="topological domain" description="Lumenal" evidence="2">
    <location>
        <begin position="22"/>
        <end position="169"/>
    </location>
</feature>
<feature type="transmembrane region" description="Helical" evidence="2">
    <location>
        <begin position="170"/>
        <end position="190"/>
    </location>
</feature>
<feature type="topological domain" description="Cytoplasmic" evidence="2">
    <location>
        <begin position="191"/>
        <end position="225"/>
    </location>
</feature>
<feature type="region of interest" description="Disordered" evidence="3">
    <location>
        <begin position="203"/>
        <end position="225"/>
    </location>
</feature>
<feature type="compositionally biased region" description="Basic and acidic residues" evidence="3">
    <location>
        <begin position="212"/>
        <end position="225"/>
    </location>
</feature>
<evidence type="ECO:0000250" key="1"/>
<evidence type="ECO:0000255" key="2"/>
<evidence type="ECO:0000256" key="3">
    <source>
        <dbReference type="SAM" id="MobiDB-lite"/>
    </source>
</evidence>
<evidence type="ECO:0000305" key="4"/>
<accession>B3LS11</accession>
<protein>
    <recommendedName>
        <fullName>Increased recombination centers protein 22</fullName>
    </recommendedName>
</protein>
<organism>
    <name type="scientific">Saccharomyces cerevisiae (strain RM11-1a)</name>
    <name type="common">Baker's yeast</name>
    <dbReference type="NCBI Taxonomy" id="285006"/>
    <lineage>
        <taxon>Eukaryota</taxon>
        <taxon>Fungi</taxon>
        <taxon>Dikarya</taxon>
        <taxon>Ascomycota</taxon>
        <taxon>Saccharomycotina</taxon>
        <taxon>Saccharomycetes</taxon>
        <taxon>Saccharomycetales</taxon>
        <taxon>Saccharomycetaceae</taxon>
        <taxon>Saccharomyces</taxon>
    </lineage>
</organism>
<gene>
    <name type="primary">IRC22</name>
    <name type="ORF">SCRG_04466</name>
</gene>